<proteinExistence type="inferred from homology"/>
<evidence type="ECO:0000255" key="1">
    <source>
        <dbReference type="HAMAP-Rule" id="MF_00204"/>
    </source>
</evidence>
<dbReference type="EMBL" id="BA000039">
    <property type="protein sequence ID" value="BAC09585.1"/>
    <property type="molecule type" value="Genomic_DNA"/>
</dbReference>
<dbReference type="RefSeq" id="NP_682823.1">
    <property type="nucleotide sequence ID" value="NC_004113.1"/>
</dbReference>
<dbReference type="RefSeq" id="WP_011057868.1">
    <property type="nucleotide sequence ID" value="NC_004113.1"/>
</dbReference>
<dbReference type="SMR" id="Q8DHC6"/>
<dbReference type="STRING" id="197221.gene:10748642"/>
<dbReference type="EnsemblBacteria" id="BAC09585">
    <property type="protein sequence ID" value="BAC09585"/>
    <property type="gene ID" value="BAC09585"/>
</dbReference>
<dbReference type="KEGG" id="tel:tlr2033"/>
<dbReference type="PATRIC" id="fig|197221.4.peg.2128"/>
<dbReference type="eggNOG" id="COG0556">
    <property type="taxonomic scope" value="Bacteria"/>
</dbReference>
<dbReference type="Proteomes" id="UP000000440">
    <property type="component" value="Chromosome"/>
</dbReference>
<dbReference type="GO" id="GO:0005737">
    <property type="term" value="C:cytoplasm"/>
    <property type="evidence" value="ECO:0007669"/>
    <property type="project" value="UniProtKB-SubCell"/>
</dbReference>
<dbReference type="GO" id="GO:0009380">
    <property type="term" value="C:excinuclease repair complex"/>
    <property type="evidence" value="ECO:0007669"/>
    <property type="project" value="InterPro"/>
</dbReference>
<dbReference type="GO" id="GO:0005524">
    <property type="term" value="F:ATP binding"/>
    <property type="evidence" value="ECO:0007669"/>
    <property type="project" value="UniProtKB-UniRule"/>
</dbReference>
<dbReference type="GO" id="GO:0016887">
    <property type="term" value="F:ATP hydrolysis activity"/>
    <property type="evidence" value="ECO:0007669"/>
    <property type="project" value="InterPro"/>
</dbReference>
<dbReference type="GO" id="GO:0003677">
    <property type="term" value="F:DNA binding"/>
    <property type="evidence" value="ECO:0007669"/>
    <property type="project" value="UniProtKB-UniRule"/>
</dbReference>
<dbReference type="GO" id="GO:0009381">
    <property type="term" value="F:excinuclease ABC activity"/>
    <property type="evidence" value="ECO:0007669"/>
    <property type="project" value="UniProtKB-UniRule"/>
</dbReference>
<dbReference type="GO" id="GO:0006289">
    <property type="term" value="P:nucleotide-excision repair"/>
    <property type="evidence" value="ECO:0007669"/>
    <property type="project" value="UniProtKB-UniRule"/>
</dbReference>
<dbReference type="GO" id="GO:0009432">
    <property type="term" value="P:SOS response"/>
    <property type="evidence" value="ECO:0007669"/>
    <property type="project" value="UniProtKB-UniRule"/>
</dbReference>
<dbReference type="CDD" id="cd17916">
    <property type="entry name" value="DEXHc_UvrB"/>
    <property type="match status" value="1"/>
</dbReference>
<dbReference type="CDD" id="cd18790">
    <property type="entry name" value="SF2_C_UvrB"/>
    <property type="match status" value="1"/>
</dbReference>
<dbReference type="Gene3D" id="3.40.50.300">
    <property type="entry name" value="P-loop containing nucleotide triphosphate hydrolases"/>
    <property type="match status" value="3"/>
</dbReference>
<dbReference type="Gene3D" id="4.10.860.10">
    <property type="entry name" value="UVR domain"/>
    <property type="match status" value="1"/>
</dbReference>
<dbReference type="HAMAP" id="MF_00204">
    <property type="entry name" value="UvrB"/>
    <property type="match status" value="1"/>
</dbReference>
<dbReference type="InterPro" id="IPR006935">
    <property type="entry name" value="Helicase/UvrB_N"/>
</dbReference>
<dbReference type="InterPro" id="IPR014001">
    <property type="entry name" value="Helicase_ATP-bd"/>
</dbReference>
<dbReference type="InterPro" id="IPR001650">
    <property type="entry name" value="Helicase_C-like"/>
</dbReference>
<dbReference type="InterPro" id="IPR027417">
    <property type="entry name" value="P-loop_NTPase"/>
</dbReference>
<dbReference type="InterPro" id="IPR001943">
    <property type="entry name" value="UVR_dom"/>
</dbReference>
<dbReference type="InterPro" id="IPR036876">
    <property type="entry name" value="UVR_dom_sf"/>
</dbReference>
<dbReference type="InterPro" id="IPR004807">
    <property type="entry name" value="UvrB"/>
</dbReference>
<dbReference type="InterPro" id="IPR041471">
    <property type="entry name" value="UvrB_inter"/>
</dbReference>
<dbReference type="InterPro" id="IPR024759">
    <property type="entry name" value="UvrB_YAD/RRR_dom"/>
</dbReference>
<dbReference type="NCBIfam" id="NF003673">
    <property type="entry name" value="PRK05298.1"/>
    <property type="match status" value="1"/>
</dbReference>
<dbReference type="NCBIfam" id="TIGR00631">
    <property type="entry name" value="uvrb"/>
    <property type="match status" value="1"/>
</dbReference>
<dbReference type="PANTHER" id="PTHR24029">
    <property type="entry name" value="UVRABC SYSTEM PROTEIN B"/>
    <property type="match status" value="1"/>
</dbReference>
<dbReference type="PANTHER" id="PTHR24029:SF0">
    <property type="entry name" value="UVRABC SYSTEM PROTEIN B"/>
    <property type="match status" value="1"/>
</dbReference>
<dbReference type="Pfam" id="PF00271">
    <property type="entry name" value="Helicase_C"/>
    <property type="match status" value="1"/>
</dbReference>
<dbReference type="Pfam" id="PF04851">
    <property type="entry name" value="ResIII"/>
    <property type="match status" value="1"/>
</dbReference>
<dbReference type="Pfam" id="PF02151">
    <property type="entry name" value="UVR"/>
    <property type="match status" value="1"/>
</dbReference>
<dbReference type="Pfam" id="PF12344">
    <property type="entry name" value="UvrB"/>
    <property type="match status" value="1"/>
</dbReference>
<dbReference type="Pfam" id="PF17757">
    <property type="entry name" value="UvrB_inter"/>
    <property type="match status" value="1"/>
</dbReference>
<dbReference type="SMART" id="SM00487">
    <property type="entry name" value="DEXDc"/>
    <property type="match status" value="1"/>
</dbReference>
<dbReference type="SMART" id="SM00490">
    <property type="entry name" value="HELICc"/>
    <property type="match status" value="1"/>
</dbReference>
<dbReference type="SUPFAM" id="SSF46600">
    <property type="entry name" value="C-terminal UvrC-binding domain of UvrB"/>
    <property type="match status" value="1"/>
</dbReference>
<dbReference type="SUPFAM" id="SSF52540">
    <property type="entry name" value="P-loop containing nucleoside triphosphate hydrolases"/>
    <property type="match status" value="2"/>
</dbReference>
<dbReference type="PROSITE" id="PS51192">
    <property type="entry name" value="HELICASE_ATP_BIND_1"/>
    <property type="match status" value="1"/>
</dbReference>
<dbReference type="PROSITE" id="PS51194">
    <property type="entry name" value="HELICASE_CTER"/>
    <property type="match status" value="1"/>
</dbReference>
<dbReference type="PROSITE" id="PS50151">
    <property type="entry name" value="UVR"/>
    <property type="match status" value="1"/>
</dbReference>
<sequence length="668" mass="75675">MTSTPFRIHAPFEPTGDQPQAIQKLVAGVQAGHRFQTLLGATGTGKTHTIARVIEALGRPTLVLAHNKTLAAQLCNELRSFFPENAVEYFISYYDYYQPEAYIPVTDTYIEKSASINEEIDMLRHSATRSLFERRDVIVVASISCIYGLGIPAEYLKAAIPLEVGRETELRQLLRQLATIQYTRNDVELGRGRFRVRGDVLEIGPAYEDRIIRVEFFGDEIEAIRYVDPLTGETLQSVERLNIYPAKHFVTPAERLEAACVAIEAELQAQVANLEAQNKLLEAQRLSQRTRYDLEMLRQVGYCNGVENYSRHLAGRAAGEPPECLIDYFPENWLLVVDESHVTVPQIRGMYNGDQARKKVLIDHGFRLPSAADNRPLKPEEFWQKVQQCIFVSATPGDWELAVSTQVVEQIIRPTGVVDPEIFVRPTQGQVDDLYGEIRLRCDRQERVLVTTLTKRMAEDLTEYFQERGVRVRYLHSEINAIERIEILEALRQGDFDVLIGVNLLREGLDLPEVSLVAILDADKEGFLRAERSLIQTIGRAARHVRGQAILYADTLTESMQKAIQETERRRAIQLAYNQAHGIIPQPIVKKTSNAILAFLDVSRRLNAESVPVLSSQTLQDLSLEDIPPLIQDLEAKMKAAAQELAFEEAARYRDQIKRLRDRLVGHP</sequence>
<comment type="function">
    <text evidence="1">The UvrABC repair system catalyzes the recognition and processing of DNA lesions. A damage recognition complex composed of 2 UvrA and 2 UvrB subunits scans DNA for abnormalities. Upon binding of the UvrA(2)B(2) complex to a putative damaged site, the DNA wraps around one UvrB monomer. DNA wrap is dependent on ATP binding by UvrB and probably causes local melting of the DNA helix, facilitating insertion of UvrB beta-hairpin between the DNA strands. Then UvrB probes one DNA strand for the presence of a lesion. If a lesion is found the UvrA subunits dissociate and the UvrB-DNA preincision complex is formed. This complex is subsequently bound by UvrC and the second UvrB is released. If no lesion is found, the DNA wraps around the other UvrB subunit that will check the other stand for damage.</text>
</comment>
<comment type="subunit">
    <text evidence="1">Forms a heterotetramer with UvrA during the search for lesions. Interacts with UvrC in an incision complex.</text>
</comment>
<comment type="subcellular location">
    <subcellularLocation>
        <location evidence="1">Cytoplasm</location>
    </subcellularLocation>
</comment>
<comment type="domain">
    <text evidence="1">The beta-hairpin motif is involved in DNA binding.</text>
</comment>
<comment type="similarity">
    <text evidence="1">Belongs to the UvrB family.</text>
</comment>
<protein>
    <recommendedName>
        <fullName evidence="1">UvrABC system protein B</fullName>
        <shortName evidence="1">Protein UvrB</shortName>
    </recommendedName>
    <alternativeName>
        <fullName evidence="1">Excinuclease ABC subunit B</fullName>
    </alternativeName>
</protein>
<organism>
    <name type="scientific">Thermosynechococcus vestitus (strain NIES-2133 / IAM M-273 / BP-1)</name>
    <dbReference type="NCBI Taxonomy" id="197221"/>
    <lineage>
        <taxon>Bacteria</taxon>
        <taxon>Bacillati</taxon>
        <taxon>Cyanobacteriota</taxon>
        <taxon>Cyanophyceae</taxon>
        <taxon>Acaryochloridales</taxon>
        <taxon>Thermosynechococcaceae</taxon>
        <taxon>Thermosynechococcus</taxon>
    </lineage>
</organism>
<reference key="1">
    <citation type="journal article" date="2002" name="DNA Res.">
        <title>Complete genome structure of the thermophilic cyanobacterium Thermosynechococcus elongatus BP-1.</title>
        <authorList>
            <person name="Nakamura Y."/>
            <person name="Kaneko T."/>
            <person name="Sato S."/>
            <person name="Ikeuchi M."/>
            <person name="Katoh H."/>
            <person name="Sasamoto S."/>
            <person name="Watanabe A."/>
            <person name="Iriguchi M."/>
            <person name="Kawashima K."/>
            <person name="Kimura T."/>
            <person name="Kishida Y."/>
            <person name="Kiyokawa C."/>
            <person name="Kohara M."/>
            <person name="Matsumoto M."/>
            <person name="Matsuno A."/>
            <person name="Nakazaki N."/>
            <person name="Shimpo S."/>
            <person name="Sugimoto M."/>
            <person name="Takeuchi C."/>
            <person name="Yamada M."/>
            <person name="Tabata S."/>
        </authorList>
    </citation>
    <scope>NUCLEOTIDE SEQUENCE [LARGE SCALE GENOMIC DNA]</scope>
    <source>
        <strain>NIES-2133 / IAM M-273 / BP-1</strain>
    </source>
</reference>
<name>UVRB_THEVB</name>
<keyword id="KW-0067">ATP-binding</keyword>
<keyword id="KW-0963">Cytoplasm</keyword>
<keyword id="KW-0227">DNA damage</keyword>
<keyword id="KW-0228">DNA excision</keyword>
<keyword id="KW-0234">DNA repair</keyword>
<keyword id="KW-0267">Excision nuclease</keyword>
<keyword id="KW-0547">Nucleotide-binding</keyword>
<keyword id="KW-1185">Reference proteome</keyword>
<keyword id="KW-0742">SOS response</keyword>
<feature type="chain" id="PRO_0000227374" description="UvrABC system protein B">
    <location>
        <begin position="1"/>
        <end position="668"/>
    </location>
</feature>
<feature type="domain" description="Helicase ATP-binding" evidence="1">
    <location>
        <begin position="27"/>
        <end position="413"/>
    </location>
</feature>
<feature type="domain" description="Helicase C-terminal" evidence="1">
    <location>
        <begin position="430"/>
        <end position="596"/>
    </location>
</feature>
<feature type="domain" description="UVR" evidence="1">
    <location>
        <begin position="628"/>
        <end position="663"/>
    </location>
</feature>
<feature type="short sequence motif" description="Beta-hairpin">
    <location>
        <begin position="93"/>
        <end position="116"/>
    </location>
</feature>
<feature type="binding site" evidence="1">
    <location>
        <begin position="40"/>
        <end position="47"/>
    </location>
    <ligand>
        <name>ATP</name>
        <dbReference type="ChEBI" id="CHEBI:30616"/>
    </ligand>
</feature>
<accession>Q8DHC6</accession>
<gene>
    <name evidence="1" type="primary">uvrB</name>
    <name type="ordered locus">tlr2033</name>
</gene>